<sequence length="302" mass="33872">MKKNRLNLNGVVVINKAKDISSNKVLQQLKYLFNAQKAGHTGTLDPMATGVLPICFGRATKIAQYLLDADKEYIATIRLGIETDSGDAEGEIIAKSINIPELSAEYLEIVLAKFSGDVVQIPPMYSALKYNGQPLYKLAREGKTVEVKSRNIKIYELELLEFNIDSLKIRVKCSKGTYIRSLAIDIGKTLGCGGHLIALQRTQSGPFKLSEAFRLEQLKDLSFEQKIASITNIESVFIDKPIYSLLEEEKNDLYKRGLFADKPHLDGTVRIYDVEKFVAIAEFDKGKLINKKFFDQDILISE</sequence>
<reference key="1">
    <citation type="journal article" date="2009" name="PLoS ONE">
        <title>Complete genome sequence of Francisella tularensis subspecies holarctica FTNF002-00.</title>
        <authorList>
            <person name="Barabote R.D."/>
            <person name="Xie G."/>
            <person name="Brettin T.S."/>
            <person name="Hinrichs S.H."/>
            <person name="Fey P.D."/>
            <person name="Jay J.J."/>
            <person name="Engle J.L."/>
            <person name="Godbole S.D."/>
            <person name="Noronha J.M."/>
            <person name="Scheuermann R.H."/>
            <person name="Zhou L.W."/>
            <person name="Lion C."/>
            <person name="Dempsey M.P."/>
        </authorList>
    </citation>
    <scope>NUCLEOTIDE SEQUENCE [LARGE SCALE GENOMIC DNA]</scope>
    <source>
        <strain>FTNF002-00 / FTA</strain>
    </source>
</reference>
<evidence type="ECO:0000255" key="1">
    <source>
        <dbReference type="HAMAP-Rule" id="MF_01080"/>
    </source>
</evidence>
<gene>
    <name evidence="1" type="primary">truB</name>
    <name type="ordered locus">FTA_0588</name>
</gene>
<protein>
    <recommendedName>
        <fullName evidence="1">tRNA pseudouridine synthase B</fullName>
        <ecNumber evidence="1">5.4.99.25</ecNumber>
    </recommendedName>
    <alternativeName>
        <fullName evidence="1">tRNA pseudouridine(55) synthase</fullName>
        <shortName evidence="1">Psi55 synthase</shortName>
    </alternativeName>
    <alternativeName>
        <fullName evidence="1">tRNA pseudouridylate synthase</fullName>
    </alternativeName>
    <alternativeName>
        <fullName evidence="1">tRNA-uridine isomerase</fullName>
    </alternativeName>
</protein>
<name>TRUB_FRATF</name>
<keyword id="KW-0413">Isomerase</keyword>
<keyword id="KW-0819">tRNA processing</keyword>
<comment type="function">
    <text evidence="1">Responsible for synthesis of pseudouridine from uracil-55 in the psi GC loop of transfer RNAs.</text>
</comment>
<comment type="catalytic activity">
    <reaction evidence="1">
        <text>uridine(55) in tRNA = pseudouridine(55) in tRNA</text>
        <dbReference type="Rhea" id="RHEA:42532"/>
        <dbReference type="Rhea" id="RHEA-COMP:10101"/>
        <dbReference type="Rhea" id="RHEA-COMP:10102"/>
        <dbReference type="ChEBI" id="CHEBI:65314"/>
        <dbReference type="ChEBI" id="CHEBI:65315"/>
        <dbReference type="EC" id="5.4.99.25"/>
    </reaction>
</comment>
<comment type="similarity">
    <text evidence="1">Belongs to the pseudouridine synthase TruB family. Type 1 subfamily.</text>
</comment>
<feature type="chain" id="PRO_1000084594" description="tRNA pseudouridine synthase B">
    <location>
        <begin position="1"/>
        <end position="302"/>
    </location>
</feature>
<feature type="active site" description="Nucleophile" evidence="1">
    <location>
        <position position="45"/>
    </location>
</feature>
<dbReference type="EC" id="5.4.99.25" evidence="1"/>
<dbReference type="EMBL" id="CP000803">
    <property type="protein sequence ID" value="ABU61064.1"/>
    <property type="molecule type" value="Genomic_DNA"/>
</dbReference>
<dbReference type="RefSeq" id="WP_003014912.1">
    <property type="nucleotide sequence ID" value="NC_009749.1"/>
</dbReference>
<dbReference type="SMR" id="A7NAR1"/>
<dbReference type="KEGG" id="fta:FTA_0588"/>
<dbReference type="HOGENOM" id="CLU_032087_0_3_6"/>
<dbReference type="GO" id="GO:0003723">
    <property type="term" value="F:RNA binding"/>
    <property type="evidence" value="ECO:0007669"/>
    <property type="project" value="InterPro"/>
</dbReference>
<dbReference type="GO" id="GO:0160148">
    <property type="term" value="F:tRNA pseudouridine(55) synthase activity"/>
    <property type="evidence" value="ECO:0007669"/>
    <property type="project" value="UniProtKB-EC"/>
</dbReference>
<dbReference type="GO" id="GO:1990481">
    <property type="term" value="P:mRNA pseudouridine synthesis"/>
    <property type="evidence" value="ECO:0007669"/>
    <property type="project" value="TreeGrafter"/>
</dbReference>
<dbReference type="GO" id="GO:0031119">
    <property type="term" value="P:tRNA pseudouridine synthesis"/>
    <property type="evidence" value="ECO:0007669"/>
    <property type="project" value="UniProtKB-UniRule"/>
</dbReference>
<dbReference type="CDD" id="cd02573">
    <property type="entry name" value="PseudoU_synth_EcTruB"/>
    <property type="match status" value="1"/>
</dbReference>
<dbReference type="FunFam" id="3.30.2350.10:FF:000011">
    <property type="entry name" value="tRNA pseudouridine synthase B"/>
    <property type="match status" value="1"/>
</dbReference>
<dbReference type="Gene3D" id="3.30.2350.10">
    <property type="entry name" value="Pseudouridine synthase"/>
    <property type="match status" value="1"/>
</dbReference>
<dbReference type="HAMAP" id="MF_01080">
    <property type="entry name" value="TruB_bact"/>
    <property type="match status" value="1"/>
</dbReference>
<dbReference type="InterPro" id="IPR020103">
    <property type="entry name" value="PsdUridine_synth_cat_dom_sf"/>
</dbReference>
<dbReference type="InterPro" id="IPR002501">
    <property type="entry name" value="PsdUridine_synth_N"/>
</dbReference>
<dbReference type="InterPro" id="IPR014780">
    <property type="entry name" value="tRNA_psdUridine_synth_TruB"/>
</dbReference>
<dbReference type="InterPro" id="IPR032819">
    <property type="entry name" value="TruB_C"/>
</dbReference>
<dbReference type="NCBIfam" id="TIGR00431">
    <property type="entry name" value="TruB"/>
    <property type="match status" value="1"/>
</dbReference>
<dbReference type="PANTHER" id="PTHR13767:SF2">
    <property type="entry name" value="PSEUDOURIDYLATE SYNTHASE TRUB1"/>
    <property type="match status" value="1"/>
</dbReference>
<dbReference type="PANTHER" id="PTHR13767">
    <property type="entry name" value="TRNA-PSEUDOURIDINE SYNTHASE"/>
    <property type="match status" value="1"/>
</dbReference>
<dbReference type="Pfam" id="PF16198">
    <property type="entry name" value="TruB_C_2"/>
    <property type="match status" value="1"/>
</dbReference>
<dbReference type="Pfam" id="PF01509">
    <property type="entry name" value="TruB_N"/>
    <property type="match status" value="1"/>
</dbReference>
<dbReference type="SUPFAM" id="SSF55120">
    <property type="entry name" value="Pseudouridine synthase"/>
    <property type="match status" value="1"/>
</dbReference>
<organism>
    <name type="scientific">Francisella tularensis subsp. holarctica (strain FTNF002-00 / FTA)</name>
    <dbReference type="NCBI Taxonomy" id="458234"/>
    <lineage>
        <taxon>Bacteria</taxon>
        <taxon>Pseudomonadati</taxon>
        <taxon>Pseudomonadota</taxon>
        <taxon>Gammaproteobacteria</taxon>
        <taxon>Thiotrichales</taxon>
        <taxon>Francisellaceae</taxon>
        <taxon>Francisella</taxon>
    </lineage>
</organism>
<proteinExistence type="inferred from homology"/>
<accession>A7NAR1</accession>